<reference key="1">
    <citation type="journal article" date="1999" name="Biol. J. Linn. Soc. Lond.">
        <title>Origin of the Sulawesi macaques (Cercopithecidae: Macaca) as suggested by mitochondrial DNA phylogeny.</title>
        <authorList>
            <person name="Evans B.J."/>
            <person name="Morales J.C."/>
            <person name="Supriatna J."/>
            <person name="Melnick D.J."/>
        </authorList>
    </citation>
    <scope>NUCLEOTIDE SEQUENCE [GENOMIC DNA]</scope>
    <source>
        <strain>Isolate 660nigra</strain>
        <strain>Isolate 661nigra</strain>
    </source>
</reference>
<organism>
    <name type="scientific">Macaca nigra</name>
    <name type="common">Celebes black macaque</name>
    <name type="synonym">Crested black macaque</name>
    <dbReference type="NCBI Taxonomy" id="54600"/>
    <lineage>
        <taxon>Eukaryota</taxon>
        <taxon>Metazoa</taxon>
        <taxon>Chordata</taxon>
        <taxon>Craniata</taxon>
        <taxon>Vertebrata</taxon>
        <taxon>Euteleostomi</taxon>
        <taxon>Mammalia</taxon>
        <taxon>Eutheria</taxon>
        <taxon>Euarchontoglires</taxon>
        <taxon>Primates</taxon>
        <taxon>Haplorrhini</taxon>
        <taxon>Catarrhini</taxon>
        <taxon>Cercopithecidae</taxon>
        <taxon>Cercopithecinae</taxon>
        <taxon>Macaca</taxon>
    </lineage>
</organism>
<protein>
    <recommendedName>
        <fullName>NADH-ubiquinone oxidoreductase chain 4L</fullName>
        <ecNumber>7.1.1.2</ecNumber>
    </recommendedName>
    <alternativeName>
        <fullName>NADH dehydrogenase subunit 4L</fullName>
    </alternativeName>
</protein>
<evidence type="ECO:0000250" key="1">
    <source>
        <dbReference type="UniProtKB" id="P03901"/>
    </source>
</evidence>
<evidence type="ECO:0000250" key="2">
    <source>
        <dbReference type="UniProtKB" id="P03902"/>
    </source>
</evidence>
<evidence type="ECO:0000255" key="3"/>
<evidence type="ECO:0000305" key="4"/>
<comment type="function">
    <text evidence="1">Core subunit of the mitochondrial membrane respiratory chain NADH dehydrogenase (Complex I) which catalyzes electron transfer from NADH through the respiratory chain, using ubiquinone as an electron acceptor. Part of the enzyme membrane arm which is embedded in the lipid bilayer and involved in proton translocation.</text>
</comment>
<comment type="catalytic activity">
    <reaction evidence="1">
        <text>a ubiquinone + NADH + 5 H(+)(in) = a ubiquinol + NAD(+) + 4 H(+)(out)</text>
        <dbReference type="Rhea" id="RHEA:29091"/>
        <dbReference type="Rhea" id="RHEA-COMP:9565"/>
        <dbReference type="Rhea" id="RHEA-COMP:9566"/>
        <dbReference type="ChEBI" id="CHEBI:15378"/>
        <dbReference type="ChEBI" id="CHEBI:16389"/>
        <dbReference type="ChEBI" id="CHEBI:17976"/>
        <dbReference type="ChEBI" id="CHEBI:57540"/>
        <dbReference type="ChEBI" id="CHEBI:57945"/>
        <dbReference type="EC" id="7.1.1.2"/>
    </reaction>
    <physiologicalReaction direction="left-to-right" evidence="1">
        <dbReference type="Rhea" id="RHEA:29092"/>
    </physiologicalReaction>
</comment>
<comment type="subunit">
    <text evidence="2">Core subunit of respiratory chain NADH dehydrogenase (Complex I) which is composed of 45 different subunits.</text>
</comment>
<comment type="subcellular location">
    <subcellularLocation>
        <location evidence="2">Mitochondrion inner membrane</location>
        <topology evidence="3">Multi-pass membrane protein</topology>
    </subcellularLocation>
</comment>
<comment type="similarity">
    <text evidence="4">Belongs to the complex I subunit 4L family.</text>
</comment>
<sequence>MIPTYMNIMLAFTISLLGMLTYRSHLVASLLCLEGMMMSLFIMTTLIASNTHSPLINIMPIILLVFAACEAAVGLALLISISNTYGLDYIHNLNLLQC</sequence>
<name>NU4LM_MACNG</name>
<accession>Q9XL45</accession>
<accession>Q7J3B9</accession>
<geneLocation type="mitochondrion"/>
<dbReference type="EC" id="7.1.1.2"/>
<dbReference type="EMBL" id="AF091408">
    <property type="protein sequence ID" value="AAD24704.1"/>
    <property type="molecule type" value="Genomic_DNA"/>
</dbReference>
<dbReference type="EMBL" id="AF091409">
    <property type="protein sequence ID" value="AAD24706.1"/>
    <property type="molecule type" value="Genomic_DNA"/>
</dbReference>
<dbReference type="SMR" id="Q9XL45"/>
<dbReference type="GO" id="GO:0005743">
    <property type="term" value="C:mitochondrial inner membrane"/>
    <property type="evidence" value="ECO:0000250"/>
    <property type="project" value="UniProtKB"/>
</dbReference>
<dbReference type="GO" id="GO:0045271">
    <property type="term" value="C:respiratory chain complex I"/>
    <property type="evidence" value="ECO:0000250"/>
    <property type="project" value="UniProtKB"/>
</dbReference>
<dbReference type="GO" id="GO:0008137">
    <property type="term" value="F:NADH dehydrogenase (ubiquinone) activity"/>
    <property type="evidence" value="ECO:0000250"/>
    <property type="project" value="UniProtKB"/>
</dbReference>
<dbReference type="GO" id="GO:0042773">
    <property type="term" value="P:ATP synthesis coupled electron transport"/>
    <property type="evidence" value="ECO:0007669"/>
    <property type="project" value="InterPro"/>
</dbReference>
<dbReference type="FunFam" id="1.10.287.3510:FF:000002">
    <property type="entry name" value="NADH-ubiquinone oxidoreductase chain 4L"/>
    <property type="match status" value="1"/>
</dbReference>
<dbReference type="Gene3D" id="1.10.287.3510">
    <property type="match status" value="1"/>
</dbReference>
<dbReference type="InterPro" id="IPR001133">
    <property type="entry name" value="NADH_UbQ_OxRdtase_chain4L/K"/>
</dbReference>
<dbReference type="InterPro" id="IPR039428">
    <property type="entry name" value="NUOK/Mnh_C1-like"/>
</dbReference>
<dbReference type="PANTHER" id="PTHR11434:SF0">
    <property type="entry name" value="NADH-UBIQUINONE OXIDOREDUCTASE CHAIN 4L"/>
    <property type="match status" value="1"/>
</dbReference>
<dbReference type="PANTHER" id="PTHR11434">
    <property type="entry name" value="NADH-UBIQUINONE OXIDOREDUCTASE SUBUNIT ND4L"/>
    <property type="match status" value="1"/>
</dbReference>
<dbReference type="Pfam" id="PF00420">
    <property type="entry name" value="Oxidored_q2"/>
    <property type="match status" value="1"/>
</dbReference>
<proteinExistence type="inferred from homology"/>
<keyword id="KW-0249">Electron transport</keyword>
<keyword id="KW-0472">Membrane</keyword>
<keyword id="KW-0496">Mitochondrion</keyword>
<keyword id="KW-0999">Mitochondrion inner membrane</keyword>
<keyword id="KW-0520">NAD</keyword>
<keyword id="KW-0679">Respiratory chain</keyword>
<keyword id="KW-1278">Translocase</keyword>
<keyword id="KW-0812">Transmembrane</keyword>
<keyword id="KW-1133">Transmembrane helix</keyword>
<keyword id="KW-0813">Transport</keyword>
<keyword id="KW-0830">Ubiquinone</keyword>
<gene>
    <name type="primary">MT-ND4L</name>
    <name type="synonym">MTND4L</name>
    <name type="synonym">NADH4L</name>
    <name type="synonym">ND4L</name>
</gene>
<feature type="chain" id="PRO_0000275049" description="NADH-ubiquinone oxidoreductase chain 4L">
    <location>
        <begin position="1"/>
        <end position="98"/>
    </location>
</feature>
<feature type="transmembrane region" description="Helical" evidence="3">
    <location>
        <begin position="1"/>
        <end position="21"/>
    </location>
</feature>
<feature type="transmembrane region" description="Helical" evidence="3">
    <location>
        <begin position="27"/>
        <end position="47"/>
    </location>
</feature>
<feature type="transmembrane region" description="Helical" evidence="3">
    <location>
        <begin position="61"/>
        <end position="81"/>
    </location>
</feature>
<feature type="sequence variant" description="In strain: Isolate 661nigra.">
    <original>T</original>
    <variation>A</variation>
    <location>
        <position position="44"/>
    </location>
</feature>
<feature type="sequence variant" description="In strain: Isolate 661nigra.">
    <original>S</original>
    <variation>F</variation>
    <location>
        <position position="53"/>
    </location>
</feature>